<reference key="1">
    <citation type="journal article" date="1997" name="Nature">
        <title>The nucleotide sequence of Saccharomyces cerevisiae chromosome XIII.</title>
        <authorList>
            <person name="Bowman S."/>
            <person name="Churcher C.M."/>
            <person name="Badcock K."/>
            <person name="Brown D."/>
            <person name="Chillingworth T."/>
            <person name="Connor R."/>
            <person name="Dedman K."/>
            <person name="Devlin K."/>
            <person name="Gentles S."/>
            <person name="Hamlin N."/>
            <person name="Hunt S."/>
            <person name="Jagels K."/>
            <person name="Lye G."/>
            <person name="Moule S."/>
            <person name="Odell C."/>
            <person name="Pearson D."/>
            <person name="Rajandream M.A."/>
            <person name="Rice P."/>
            <person name="Skelton J."/>
            <person name="Walsh S.V."/>
            <person name="Whitehead S."/>
            <person name="Barrell B.G."/>
        </authorList>
    </citation>
    <scope>NUCLEOTIDE SEQUENCE [LARGE SCALE GENOMIC DNA]</scope>
    <source>
        <strain>ATCC 204508 / S288c</strain>
    </source>
</reference>
<reference key="2">
    <citation type="journal article" date="2014" name="G3 (Bethesda)">
        <title>The reference genome sequence of Saccharomyces cerevisiae: Then and now.</title>
        <authorList>
            <person name="Engel S.R."/>
            <person name="Dietrich F.S."/>
            <person name="Fisk D.G."/>
            <person name="Binkley G."/>
            <person name="Balakrishnan R."/>
            <person name="Costanzo M.C."/>
            <person name="Dwight S.S."/>
            <person name="Hitz B.C."/>
            <person name="Karra K."/>
            <person name="Nash R.S."/>
            <person name="Weng S."/>
            <person name="Wong E.D."/>
            <person name="Lloyd P."/>
            <person name="Skrzypek M.S."/>
            <person name="Miyasato S.R."/>
            <person name="Simison M."/>
            <person name="Cherry J.M."/>
        </authorList>
    </citation>
    <scope>GENOME REANNOTATION</scope>
    <source>
        <strain>ATCC 204508 / S288c</strain>
    </source>
</reference>
<reference key="3">
    <citation type="journal article" date="1998" name="Yeast">
        <title>The list of cytoplasmic ribosomal proteins of Saccharomyces cerevisiae.</title>
        <authorList>
            <person name="Planta R.J."/>
            <person name="Mager W.H."/>
        </authorList>
    </citation>
    <scope>NOMENCLATURE</scope>
    <scope>SUBUNIT</scope>
</reference>
<reference key="4">
    <citation type="journal article" date="2003" name="Nature">
        <title>Global analysis of protein localization in budding yeast.</title>
        <authorList>
            <person name="Huh W.-K."/>
            <person name="Falvo J.V."/>
            <person name="Gerke L.C."/>
            <person name="Carroll A.S."/>
            <person name="Howson R.W."/>
            <person name="Weissman J.S."/>
            <person name="O'Shea E.K."/>
        </authorList>
    </citation>
    <scope>SUBCELLULAR LOCATION [LARGE SCALE ANALYSIS]</scope>
</reference>
<reference key="5">
    <citation type="journal article" date="2003" name="Nature">
        <title>Global analysis of protein expression in yeast.</title>
        <authorList>
            <person name="Ghaemmaghami S."/>
            <person name="Huh W.-K."/>
            <person name="Bower K."/>
            <person name="Howson R.W."/>
            <person name="Belle A."/>
            <person name="Dephoure N."/>
            <person name="O'Shea E.K."/>
            <person name="Weissman J.S."/>
        </authorList>
    </citation>
    <scope>LEVEL OF PROTEIN EXPRESSION [LARGE SCALE ANALYSIS]</scope>
</reference>
<reference key="6">
    <citation type="journal article" date="2009" name="Science">
        <title>Global analysis of Cdk1 substrate phosphorylation sites provides insights into evolution.</title>
        <authorList>
            <person name="Holt L.J."/>
            <person name="Tuch B.B."/>
            <person name="Villen J."/>
            <person name="Johnson A.D."/>
            <person name="Gygi S.P."/>
            <person name="Morgan D.O."/>
        </authorList>
    </citation>
    <scope>PHOSPHORYLATION [LARGE SCALE ANALYSIS] AT THR-144 AND THR-152</scope>
    <scope>IDENTIFICATION BY MASS SPECTROMETRY [LARGE SCALE ANALYSIS]</scope>
</reference>
<reference key="7">
    <citation type="journal article" date="2011" name="Science">
        <title>The structure of the eukaryotic ribosome at 3.0 A resolution.</title>
        <authorList>
            <person name="Ben-Shem A."/>
            <person name="Garreau de Loubresse N."/>
            <person name="Melnikov S."/>
            <person name="Jenner L."/>
            <person name="Yusupova G."/>
            <person name="Yusupov M."/>
        </authorList>
    </citation>
    <scope>SUBUNIT</scope>
    <scope>SUBCELLULAR LOCATION</scope>
</reference>
<reference key="8">
    <citation type="journal article" date="2014" name="Curr. Opin. Struct. Biol.">
        <title>A new system for naming ribosomal proteins.</title>
        <authorList>
            <person name="Ban N."/>
            <person name="Beckmann R."/>
            <person name="Cate J.H.D."/>
            <person name="Dinman J.D."/>
            <person name="Dragon F."/>
            <person name="Ellis S.R."/>
            <person name="Lafontaine D.L.J."/>
            <person name="Lindahl L."/>
            <person name="Liljas A."/>
            <person name="Lipton J.M."/>
            <person name="McAlear M.A."/>
            <person name="Moore P.B."/>
            <person name="Noller H.F."/>
            <person name="Ortega J."/>
            <person name="Panse V.G."/>
            <person name="Ramakrishnan V."/>
            <person name="Spahn C.M.T."/>
            <person name="Steitz T.A."/>
            <person name="Tchorzewski M."/>
            <person name="Tollervey D."/>
            <person name="Warren A.J."/>
            <person name="Williamson J.R."/>
            <person name="Wilson D."/>
            <person name="Yonath A."/>
            <person name="Yusupov M."/>
        </authorList>
    </citation>
    <scope>NOMENCLATURE</scope>
</reference>
<proteinExistence type="evidence at protein level"/>
<evidence type="ECO:0000269" key="1">
    <source>
    </source>
</evidence>
<evidence type="ECO:0000269" key="2">
    <source>
    </source>
</evidence>
<evidence type="ECO:0000269" key="3">
    <source>
    </source>
</evidence>
<evidence type="ECO:0000303" key="4">
    <source>
    </source>
</evidence>
<evidence type="ECO:0000303" key="5">
    <source>
    </source>
</evidence>
<evidence type="ECO:0000305" key="6"/>
<evidence type="ECO:0000305" key="7">
    <source>
    </source>
</evidence>
<evidence type="ECO:0000305" key="8">
    <source>
    </source>
</evidence>
<evidence type="ECO:0007744" key="9">
    <source>
    </source>
</evidence>
<feature type="chain" id="PRO_0000192939" description="Large ribosomal subunit protein eL13B">
    <location>
        <begin position="1"/>
        <end position="199"/>
    </location>
</feature>
<feature type="modified residue" description="Phosphothreonine" evidence="9">
    <location>
        <position position="144"/>
    </location>
</feature>
<feature type="modified residue" description="Phosphothreonine" evidence="9">
    <location>
        <position position="152"/>
    </location>
</feature>
<dbReference type="EMBL" id="Z47071">
    <property type="protein sequence ID" value="CAA87356.1"/>
    <property type="molecule type" value="Genomic_DNA"/>
</dbReference>
<dbReference type="EMBL" id="BK006946">
    <property type="protein sequence ID" value="DAA10038.1"/>
    <property type="molecule type" value="Genomic_DNA"/>
</dbReference>
<dbReference type="PIR" id="S50398">
    <property type="entry name" value="S50398"/>
</dbReference>
<dbReference type="RefSeq" id="NP_013862.1">
    <property type="nucleotide sequence ID" value="NM_001182644.1"/>
</dbReference>
<dbReference type="PDB" id="4V91">
    <property type="method" value="EM"/>
    <property type="resolution" value="3.70 A"/>
    <property type="chains" value="L=1-199"/>
</dbReference>
<dbReference type="PDBsum" id="4V91"/>
<dbReference type="SMR" id="P40212"/>
<dbReference type="BioGRID" id="35318">
    <property type="interactions" value="200"/>
</dbReference>
<dbReference type="ComplexPortal" id="CPX-1601">
    <property type="entry name" value="60S cytosolic large ribosomal subunit"/>
</dbReference>
<dbReference type="DIP" id="DIP-2591N"/>
<dbReference type="FunCoup" id="P40212">
    <property type="interactions" value="1241"/>
</dbReference>
<dbReference type="IntAct" id="P40212">
    <property type="interactions" value="148"/>
</dbReference>
<dbReference type="MINT" id="P40212"/>
<dbReference type="STRING" id="4932.YMR142C"/>
<dbReference type="iPTMnet" id="P40212"/>
<dbReference type="PaxDb" id="4932-YMR142C"/>
<dbReference type="PeptideAtlas" id="P40212"/>
<dbReference type="TopDownProteomics" id="P40212"/>
<dbReference type="EnsemblFungi" id="YMR142C_mRNA">
    <property type="protein sequence ID" value="YMR142C"/>
    <property type="gene ID" value="YMR142C"/>
</dbReference>
<dbReference type="GeneID" id="855173"/>
<dbReference type="KEGG" id="sce:YMR142C"/>
<dbReference type="AGR" id="SGD:S000004750"/>
<dbReference type="SGD" id="S000004750">
    <property type="gene designation" value="RPL13B"/>
</dbReference>
<dbReference type="VEuPathDB" id="FungiDB:YMR142C"/>
<dbReference type="eggNOG" id="KOG3295">
    <property type="taxonomic scope" value="Eukaryota"/>
</dbReference>
<dbReference type="GeneTree" id="ENSGT00390000007818"/>
<dbReference type="HOGENOM" id="CLU_075696_1_0_1"/>
<dbReference type="InParanoid" id="P40212"/>
<dbReference type="OMA" id="IQKNHFR"/>
<dbReference type="OrthoDB" id="10264538at2759"/>
<dbReference type="BioCyc" id="YEAST:G3O-32834-MONOMER"/>
<dbReference type="Reactome" id="R-SCE-156827">
    <property type="pathway name" value="L13a-mediated translational silencing of Ceruloplasmin expression"/>
</dbReference>
<dbReference type="Reactome" id="R-SCE-1799339">
    <property type="pathway name" value="SRP-dependent cotranslational protein targeting to membrane"/>
</dbReference>
<dbReference type="Reactome" id="R-SCE-72689">
    <property type="pathway name" value="Formation of a pool of free 40S subunits"/>
</dbReference>
<dbReference type="Reactome" id="R-SCE-72706">
    <property type="pathway name" value="GTP hydrolysis and joining of the 60S ribosomal subunit"/>
</dbReference>
<dbReference type="Reactome" id="R-SCE-975956">
    <property type="pathway name" value="Nonsense Mediated Decay (NMD) independent of the Exon Junction Complex (EJC)"/>
</dbReference>
<dbReference type="Reactome" id="R-SCE-975957">
    <property type="pathway name" value="Nonsense Mediated Decay (NMD) enhanced by the Exon Junction Complex (EJC)"/>
</dbReference>
<dbReference type="BioGRID-ORCS" id="855173">
    <property type="hits" value="1 hit in 10 CRISPR screens"/>
</dbReference>
<dbReference type="ChiTaRS" id="RPL16A">
    <property type="organism name" value="yeast"/>
</dbReference>
<dbReference type="PRO" id="PR:P40212"/>
<dbReference type="Proteomes" id="UP000002311">
    <property type="component" value="Chromosome XIII"/>
</dbReference>
<dbReference type="RNAct" id="P40212">
    <property type="molecule type" value="protein"/>
</dbReference>
<dbReference type="GO" id="GO:0005829">
    <property type="term" value="C:cytosol"/>
    <property type="evidence" value="ECO:0000304"/>
    <property type="project" value="Reactome"/>
</dbReference>
<dbReference type="GO" id="GO:0022625">
    <property type="term" value="C:cytosolic large ribosomal subunit"/>
    <property type="evidence" value="ECO:0000314"/>
    <property type="project" value="SGD"/>
</dbReference>
<dbReference type="GO" id="GO:0003723">
    <property type="term" value="F:RNA binding"/>
    <property type="evidence" value="ECO:0000318"/>
    <property type="project" value="GO_Central"/>
</dbReference>
<dbReference type="GO" id="GO:0003735">
    <property type="term" value="F:structural constituent of ribosome"/>
    <property type="evidence" value="ECO:0000318"/>
    <property type="project" value="GO_Central"/>
</dbReference>
<dbReference type="GO" id="GO:0002181">
    <property type="term" value="P:cytoplasmic translation"/>
    <property type="evidence" value="ECO:0000305"/>
    <property type="project" value="SGD"/>
</dbReference>
<dbReference type="GO" id="GO:0016236">
    <property type="term" value="P:macroautophagy"/>
    <property type="evidence" value="ECO:0000315"/>
    <property type="project" value="SGD"/>
</dbReference>
<dbReference type="FunFam" id="1.20.5.110:FF:000003">
    <property type="entry name" value="60S ribosomal protein L13"/>
    <property type="match status" value="1"/>
</dbReference>
<dbReference type="Gene3D" id="1.20.5.110">
    <property type="match status" value="1"/>
</dbReference>
<dbReference type="HAMAP" id="MF_00499">
    <property type="entry name" value="Ribosomal_eL13"/>
    <property type="match status" value="1"/>
</dbReference>
<dbReference type="InterPro" id="IPR001380">
    <property type="entry name" value="Ribosomal_eL13"/>
</dbReference>
<dbReference type="InterPro" id="IPR018256">
    <property type="entry name" value="Ribosomal_eL13_CS"/>
</dbReference>
<dbReference type="PANTHER" id="PTHR11722">
    <property type="entry name" value="60S RIBOSOMAL PROTEIN L13"/>
    <property type="match status" value="1"/>
</dbReference>
<dbReference type="PANTHER" id="PTHR11722:SF0">
    <property type="entry name" value="LARGE RIBOSOMAL SUBUNIT PROTEIN EL13"/>
    <property type="match status" value="1"/>
</dbReference>
<dbReference type="Pfam" id="PF01294">
    <property type="entry name" value="Ribosomal_L13e"/>
    <property type="match status" value="1"/>
</dbReference>
<dbReference type="PROSITE" id="PS01104">
    <property type="entry name" value="RIBOSOMAL_L13E"/>
    <property type="match status" value="1"/>
</dbReference>
<sequence length="199" mass="22525">MAISKNLPILKNHFRKHWQERVKVHFDQAGKKVSRRNARAARAAKIAPRPLDLLRPVVRAPTVKYNRKVRAGRGFTLAEVKAAGLTAAYARTIGIAVDHRRQNRNQEIFDANVQRLKEYQSKIIVFPRDGKAPEAEQVLSAAATFPIAQPATDVEARAVQDNGESAFRTLRLARSEKKFRGIREKRAREKAEAEAEKKK</sequence>
<keyword id="KW-0002">3D-structure</keyword>
<keyword id="KW-0963">Cytoplasm</keyword>
<keyword id="KW-0597">Phosphoprotein</keyword>
<keyword id="KW-1185">Reference proteome</keyword>
<keyword id="KW-0687">Ribonucleoprotein</keyword>
<keyword id="KW-0689">Ribosomal protein</keyword>
<accession>P40212</accession>
<accession>D6VZW4</accession>
<name>RL13B_YEAST</name>
<protein>
    <recommendedName>
        <fullName evidence="4">Large ribosomal subunit protein eL13B</fullName>
    </recommendedName>
    <alternativeName>
        <fullName evidence="5">60S ribosomal protein L13-B</fullName>
    </alternativeName>
</protein>
<gene>
    <name evidence="5" type="primary">RPL13B</name>
    <name type="synonym">RPL13</name>
    <name type="ordered locus">YMR142C</name>
    <name type="ORF">YM9375.11C</name>
</gene>
<comment type="function">
    <text evidence="7">Component of the ribosome, a large ribonucleoprotein complex responsible for the synthesis of proteins in the cell. The small ribosomal subunit (SSU) binds messenger RNAs (mRNAs) and translates the encoded message by selecting cognate aminoacyl-transfer RNA (tRNA) molecules. The large subunit (LSU) contains the ribosomal catalytic site termed the peptidyl transferase center (PTC), which catalyzes the formation of peptide bonds, thereby polymerizing the amino acids delivered by tRNAs into a polypeptide chain. The nascent polypeptides leave the ribosome through a tunnel in the LSU and interact with protein factors that function in enzymatic processing, targeting, and the membrane insertion of nascent chains at the exit of the ribosomal tunnel.</text>
</comment>
<comment type="subunit">
    <text evidence="3 8">Component of the large ribosomal subunit (LSU). Mature yeast ribosomes consist of a small (40S) and a large (60S) subunit. The 40S small subunit contains 1 molecule of ribosomal RNA (18S rRNA) and 33 different proteins (encoded by 57 genes). The large 60S subunit contains 3 rRNA molecules (25S, 5.8S and 5S rRNA) and 46 different proteins (encoded by 81 genes) (PubMed:22096102, PubMed:9559554).</text>
</comment>
<comment type="subcellular location">
    <subcellularLocation>
        <location evidence="1 3">Cytoplasm</location>
    </subcellularLocation>
</comment>
<comment type="miscellaneous">
    <text evidence="2">Present with 54200 molecules/cell in log phase SD medium.</text>
</comment>
<comment type="miscellaneous">
    <text evidence="6">There are 2 genes for eL13 in yeast.</text>
</comment>
<comment type="similarity">
    <text evidence="6">Belongs to the eukaryotic ribosomal protein eL13 family.</text>
</comment>
<organism>
    <name type="scientific">Saccharomyces cerevisiae (strain ATCC 204508 / S288c)</name>
    <name type="common">Baker's yeast</name>
    <dbReference type="NCBI Taxonomy" id="559292"/>
    <lineage>
        <taxon>Eukaryota</taxon>
        <taxon>Fungi</taxon>
        <taxon>Dikarya</taxon>
        <taxon>Ascomycota</taxon>
        <taxon>Saccharomycotina</taxon>
        <taxon>Saccharomycetes</taxon>
        <taxon>Saccharomycetales</taxon>
        <taxon>Saccharomycetaceae</taxon>
        <taxon>Saccharomyces</taxon>
    </lineage>
</organism>